<gene>
    <name evidence="3" type="primary">AgnL3</name>
</gene>
<feature type="chain" id="PRO_0000449017" description="Baeyer-Villiger oxidase AgnL3">
    <location>
        <begin position="1"/>
        <end position="460"/>
    </location>
</feature>
<accession>A0A411PQN8</accession>
<keyword id="KW-0560">Oxidoreductase</keyword>
<reference key="1">
    <citation type="journal article" date="2019" name="Chem. Sci.">
        <title>Characterisation of the biosynthetic pathway to agnestins A and B reveals the reductive route to chrysophanol in fungi.</title>
        <authorList>
            <person name="Szwalbe A.J."/>
            <person name="Williams K."/>
            <person name="Song Z."/>
            <person name="de Mattos-Shipley K."/>
            <person name="Vincent J.L."/>
            <person name="Bailey A.M."/>
            <person name="Willis C.L."/>
            <person name="Cox R.J."/>
            <person name="Simpson T.J."/>
        </authorList>
    </citation>
    <scope>NUCLEOTIDE SEQUENCE [GENOMIC DNA]</scope>
    <scope>FUNCTION</scope>
    <scope>DISRUPTION PHENOTYPE</scope>
    <scope>PATHWAY</scope>
    <source>
        <strain>K5013</strain>
    </source>
</reference>
<name>AGN3_PAEDI</name>
<protein>
    <recommendedName>
        <fullName evidence="3">Baeyer-Villiger oxidase AgnL3</fullName>
        <ecNumber evidence="5">1.-.-.-</ecNumber>
    </recommendedName>
    <alternativeName>
        <fullName evidence="3">Agnestins biosynthesis cluster protein L3</fullName>
    </alternativeName>
</protein>
<proteinExistence type="inferred from homology"/>
<organism>
    <name type="scientific">Paecilomyces divaricatus</name>
    <name type="common">Penicillium divaricatum</name>
    <dbReference type="NCBI Taxonomy" id="644132"/>
    <lineage>
        <taxon>Eukaryota</taxon>
        <taxon>Fungi</taxon>
        <taxon>Dikarya</taxon>
        <taxon>Ascomycota</taxon>
        <taxon>Pezizomycotina</taxon>
        <taxon>Eurotiomycetes</taxon>
        <taxon>Eurotiomycetidae</taxon>
        <taxon>Eurotiales</taxon>
        <taxon>Thermoascaceae</taxon>
        <taxon>Paecilomyces</taxon>
    </lineage>
</organism>
<dbReference type="EC" id="1.-.-.-" evidence="5"/>
<dbReference type="EMBL" id="MH898872">
    <property type="protein sequence ID" value="QBG38885.1"/>
    <property type="molecule type" value="Genomic_DNA"/>
</dbReference>
<dbReference type="SMR" id="A0A411PQN8"/>
<dbReference type="GO" id="GO:0016491">
    <property type="term" value="F:oxidoreductase activity"/>
    <property type="evidence" value="ECO:0007669"/>
    <property type="project" value="UniProtKB-KW"/>
</dbReference>
<dbReference type="InterPro" id="IPR025337">
    <property type="entry name" value="Questin_oxidase-like"/>
</dbReference>
<dbReference type="PANTHER" id="PTHR35870:SF7">
    <property type="entry name" value="BAEYER-VILLIGER OXIDASE MDPL"/>
    <property type="match status" value="1"/>
</dbReference>
<dbReference type="PANTHER" id="PTHR35870">
    <property type="entry name" value="PROTEIN, PUTATIVE (AFU_ORTHOLOGUE AFUA_5G03330)-RELATED"/>
    <property type="match status" value="1"/>
</dbReference>
<dbReference type="Pfam" id="PF14027">
    <property type="entry name" value="Questin_oxidase"/>
    <property type="match status" value="1"/>
</dbReference>
<sequence>MADLTPVQVLPADIGILNFANIGSDSLAECNRLLDKNHRDHHMFVRDTAGHNHIVHAVLAVLALGGSPQELRDRYDDGASMQRPLPPCDAELLEKLNDPEVFMATLSERAQYTTFLTFFERKMAERGWRSVLQEYLFARTPLADAMLGRLYEGAYHALIHLGYGIEFQSPAIIAEALGQAASHDDSGIAQLFRSAEEEAVFQYPTPRGTPLIELVHEVRANDQIRTAPRWSDYGNKMRDGIVGRACEPMSTLASQFQIFPNEADLERRTAEMIGVCAYMSGAAQRPGRKRKIDFFHMHALNSALFFTVLIRQQWIRLEDRVRMVERKARLDLAWYAVAGSAALDATAITDYSSPESDGLGWDELFAAVNKEHDDGHAAKFIRALKNGEMVSRRYEQGEWAEFFPMKGDMWLKLARMCQDTTKGMPSDLKWIPFTGFEQPWKRADLAEAGETNTAEKVRLY</sequence>
<comment type="function">
    <text evidence="2">Baeyer-Villiger oxidase; part of the gene cluster that mediates the biosynthesis of agnestins, dihydroxy-xanthone metabolites (PubMed:30746079). The pathway begins with the assembly and cyclization of atrochrysone thioester by the non-reducing polyketide synthase Agnpks1 (PubMed:30746079). The atrochrysone carboxyl ACP thioesterase AgnL7 then breaks the thioester bond and releases the atrochrysone carboxylic acid as the first enzyme-free intermediate (PubMed:30746079). The decarboxylase AgnL1 then catalyzes the concerted decarboxylation-elimination required to convert atochrysone carboxylic acid into emodin anthrone, which is further oxidized to emodin by the anthrone oxygenase AgnL2 (PubMed:30746079). Emodin then undergoes reduction catalyzed by the oxidoreductase AgnL4 to yield the dihydroquinone tautomer which is the substrate for reduction by the short chain dehydrogenase AgnL6 reduction to produce hydroxyketone, followed by AgnL8 dehydration and likely spontaneous autoxidation to chrysophanol (PubMed:30746079). Baeyer-Villiger oxidation by the oxidase AgnL3 leads to monodictyphenone via cleavage of the C-10/C-10a bond of chrysophanol (PubMed:30746079). Alternative cleavage at the C-4a/C-10 bond of chrysophanol also leads to the formation some cephalone F (PubMed:30746079). Further conversion to agnestins A and B, requires reduction to dihydro-monodictyphenone, oxidation to agnestin C probably via an epoxide, and rearrangement to either agnestin A or agnestin B directly, although agnestin A or agnestin B can also interconvert (PubMed:30746079). Within the cluster, AgnR1 is the only unassigned oxidoreductase present which could be involved in this conversion. However, AgnR1 seems not to be involved in this step, and thus genes involved in the proposed oxidation/reduction may be located elsewhere on the genome (PubMed:30746079). Further agnestin A derivatives are probably formed by spontaneous decarboxylations, dehydrations and methanolysis reactions (PubMed:30746079).</text>
</comment>
<comment type="cofactor">
    <cofactor evidence="1">
        <name>NADPH</name>
        <dbReference type="ChEBI" id="CHEBI:57783"/>
    </cofactor>
</comment>
<comment type="pathway">
    <text evidence="2">Secondary metabolite biosynthesis.</text>
</comment>
<comment type="disruption phenotype">
    <text evidence="2">Leads to total loss of monodictyphenone and agnestin biosynthesis and accumulates emodin and chrysophanol.</text>
</comment>
<comment type="similarity">
    <text evidence="4">Belongs to the questin oxidase family.</text>
</comment>
<evidence type="ECO:0000250" key="1">
    <source>
        <dbReference type="UniProtKB" id="Q0CCX5"/>
    </source>
</evidence>
<evidence type="ECO:0000269" key="2">
    <source>
    </source>
</evidence>
<evidence type="ECO:0000303" key="3">
    <source>
    </source>
</evidence>
<evidence type="ECO:0000305" key="4"/>
<evidence type="ECO:0000305" key="5">
    <source>
    </source>
</evidence>